<evidence type="ECO:0000255" key="1">
    <source>
        <dbReference type="HAMAP-Rule" id="MF_01365"/>
    </source>
</evidence>
<evidence type="ECO:0000305" key="2"/>
<comment type="function">
    <text evidence="1">This protein binds to the 23S rRNA, and is important in its secondary structure. It is located near the subunit interface in the base of the L7/L12 stalk, and near the tRNA binding site of the peptidyltransferase center.</text>
</comment>
<comment type="subunit">
    <text evidence="1">Part of the 50S ribosomal subunit.</text>
</comment>
<comment type="similarity">
    <text evidence="1">Belongs to the universal ribosomal protein uL6 family.</text>
</comment>
<dbReference type="EMBL" id="CP000001">
    <property type="protein sequence ID" value="AAU20116.1"/>
    <property type="molecule type" value="Genomic_DNA"/>
</dbReference>
<dbReference type="RefSeq" id="WP_000086558.1">
    <property type="nucleotide sequence ID" value="NZ_CP009968.1"/>
</dbReference>
<dbReference type="SMR" id="Q63H75"/>
<dbReference type="GeneID" id="93010928"/>
<dbReference type="KEGG" id="bcz:BCE33L0119"/>
<dbReference type="PATRIC" id="fig|288681.22.peg.32"/>
<dbReference type="Proteomes" id="UP000002612">
    <property type="component" value="Chromosome"/>
</dbReference>
<dbReference type="GO" id="GO:0022625">
    <property type="term" value="C:cytosolic large ribosomal subunit"/>
    <property type="evidence" value="ECO:0007669"/>
    <property type="project" value="TreeGrafter"/>
</dbReference>
<dbReference type="GO" id="GO:0019843">
    <property type="term" value="F:rRNA binding"/>
    <property type="evidence" value="ECO:0007669"/>
    <property type="project" value="UniProtKB-UniRule"/>
</dbReference>
<dbReference type="GO" id="GO:0003735">
    <property type="term" value="F:structural constituent of ribosome"/>
    <property type="evidence" value="ECO:0007669"/>
    <property type="project" value="InterPro"/>
</dbReference>
<dbReference type="GO" id="GO:0002181">
    <property type="term" value="P:cytoplasmic translation"/>
    <property type="evidence" value="ECO:0007669"/>
    <property type="project" value="TreeGrafter"/>
</dbReference>
<dbReference type="FunFam" id="3.90.930.12:FF:000001">
    <property type="entry name" value="50S ribosomal protein L6"/>
    <property type="match status" value="1"/>
</dbReference>
<dbReference type="FunFam" id="3.90.930.12:FF:000002">
    <property type="entry name" value="50S ribosomal protein L6"/>
    <property type="match status" value="1"/>
</dbReference>
<dbReference type="Gene3D" id="3.90.930.12">
    <property type="entry name" value="Ribosomal protein L6, alpha-beta domain"/>
    <property type="match status" value="2"/>
</dbReference>
<dbReference type="HAMAP" id="MF_01365_B">
    <property type="entry name" value="Ribosomal_uL6_B"/>
    <property type="match status" value="1"/>
</dbReference>
<dbReference type="InterPro" id="IPR000702">
    <property type="entry name" value="Ribosomal_uL6-like"/>
</dbReference>
<dbReference type="InterPro" id="IPR036789">
    <property type="entry name" value="Ribosomal_uL6-like_a/b-dom_sf"/>
</dbReference>
<dbReference type="InterPro" id="IPR020040">
    <property type="entry name" value="Ribosomal_uL6_a/b-dom"/>
</dbReference>
<dbReference type="InterPro" id="IPR019906">
    <property type="entry name" value="Ribosomal_uL6_bac-type"/>
</dbReference>
<dbReference type="InterPro" id="IPR002358">
    <property type="entry name" value="Ribosomal_uL6_CS"/>
</dbReference>
<dbReference type="NCBIfam" id="TIGR03654">
    <property type="entry name" value="L6_bact"/>
    <property type="match status" value="1"/>
</dbReference>
<dbReference type="PANTHER" id="PTHR11655">
    <property type="entry name" value="60S/50S RIBOSOMAL PROTEIN L6/L9"/>
    <property type="match status" value="1"/>
</dbReference>
<dbReference type="PANTHER" id="PTHR11655:SF14">
    <property type="entry name" value="LARGE RIBOSOMAL SUBUNIT PROTEIN UL6M"/>
    <property type="match status" value="1"/>
</dbReference>
<dbReference type="Pfam" id="PF00347">
    <property type="entry name" value="Ribosomal_L6"/>
    <property type="match status" value="2"/>
</dbReference>
<dbReference type="PIRSF" id="PIRSF002162">
    <property type="entry name" value="Ribosomal_L6"/>
    <property type="match status" value="1"/>
</dbReference>
<dbReference type="PRINTS" id="PR00059">
    <property type="entry name" value="RIBOSOMALL6"/>
</dbReference>
<dbReference type="SUPFAM" id="SSF56053">
    <property type="entry name" value="Ribosomal protein L6"/>
    <property type="match status" value="2"/>
</dbReference>
<dbReference type="PROSITE" id="PS00525">
    <property type="entry name" value="RIBOSOMAL_L6_1"/>
    <property type="match status" value="1"/>
</dbReference>
<name>RL6_BACCZ</name>
<protein>
    <recommendedName>
        <fullName evidence="1">Large ribosomal subunit protein uL6</fullName>
    </recommendedName>
    <alternativeName>
        <fullName evidence="2">50S ribosomal protein L6</fullName>
    </alternativeName>
</protein>
<organism>
    <name type="scientific">Bacillus cereus (strain ZK / E33L)</name>
    <dbReference type="NCBI Taxonomy" id="288681"/>
    <lineage>
        <taxon>Bacteria</taxon>
        <taxon>Bacillati</taxon>
        <taxon>Bacillota</taxon>
        <taxon>Bacilli</taxon>
        <taxon>Bacillales</taxon>
        <taxon>Bacillaceae</taxon>
        <taxon>Bacillus</taxon>
        <taxon>Bacillus cereus group</taxon>
    </lineage>
</organism>
<gene>
    <name evidence="1" type="primary">rplF</name>
    <name type="ordered locus">BCE33L0119</name>
</gene>
<sequence>MSRIGKKILEIPAGVTITVAEDNTVTVKGPKGELTRTFNADMLIKIEENTLTVERPSEQKEHRALHGTTRALIGNMVEGVTEGFARGLELVGVGYRAQKQGDKLVLSVGYSHPVEMTPEAGLEVEVPAPTKIVIKGIDKQRVGEFAANIRAVRAPEPYKGKGIRYEGEVVRRKEGKTAK</sequence>
<proteinExistence type="inferred from homology"/>
<reference key="1">
    <citation type="journal article" date="2006" name="J. Bacteriol.">
        <title>Pathogenomic sequence analysis of Bacillus cereus and Bacillus thuringiensis isolates closely related to Bacillus anthracis.</title>
        <authorList>
            <person name="Han C.S."/>
            <person name="Xie G."/>
            <person name="Challacombe J.F."/>
            <person name="Altherr M.R."/>
            <person name="Bhotika S.S."/>
            <person name="Bruce D."/>
            <person name="Campbell C.S."/>
            <person name="Campbell M.L."/>
            <person name="Chen J."/>
            <person name="Chertkov O."/>
            <person name="Cleland C."/>
            <person name="Dimitrijevic M."/>
            <person name="Doggett N.A."/>
            <person name="Fawcett J.J."/>
            <person name="Glavina T."/>
            <person name="Goodwin L.A."/>
            <person name="Hill K.K."/>
            <person name="Hitchcock P."/>
            <person name="Jackson P.J."/>
            <person name="Keim P."/>
            <person name="Kewalramani A.R."/>
            <person name="Longmire J."/>
            <person name="Lucas S."/>
            <person name="Malfatti S."/>
            <person name="McMurry K."/>
            <person name="Meincke L.J."/>
            <person name="Misra M."/>
            <person name="Moseman B.L."/>
            <person name="Mundt M."/>
            <person name="Munk A.C."/>
            <person name="Okinaka R.T."/>
            <person name="Parson-Quintana B."/>
            <person name="Reilly L.P."/>
            <person name="Richardson P."/>
            <person name="Robinson D.L."/>
            <person name="Rubin E."/>
            <person name="Saunders E."/>
            <person name="Tapia R."/>
            <person name="Tesmer J.G."/>
            <person name="Thayer N."/>
            <person name="Thompson L.S."/>
            <person name="Tice H."/>
            <person name="Ticknor L.O."/>
            <person name="Wills P.L."/>
            <person name="Brettin T.S."/>
            <person name="Gilna P."/>
        </authorList>
    </citation>
    <scope>NUCLEOTIDE SEQUENCE [LARGE SCALE GENOMIC DNA]</scope>
    <source>
        <strain>ZK / E33L</strain>
    </source>
</reference>
<keyword id="KW-0687">Ribonucleoprotein</keyword>
<keyword id="KW-0689">Ribosomal protein</keyword>
<keyword id="KW-0694">RNA-binding</keyword>
<keyword id="KW-0699">rRNA-binding</keyword>
<feature type="chain" id="PRO_0000260841" description="Large ribosomal subunit protein uL6">
    <location>
        <begin position="1"/>
        <end position="179"/>
    </location>
</feature>
<accession>Q63H75</accession>